<accession>Q9KG52</accession>
<feature type="chain" id="PRO_0000220730" description="Uncharacterized protein BH0261">
    <location>
        <begin position="1"/>
        <end position="75"/>
    </location>
</feature>
<proteinExistence type="predicted"/>
<reference key="1">
    <citation type="journal article" date="2000" name="Nucleic Acids Res.">
        <title>Complete genome sequence of the alkaliphilic bacterium Bacillus halodurans and genomic sequence comparison with Bacillus subtilis.</title>
        <authorList>
            <person name="Takami H."/>
            <person name="Nakasone K."/>
            <person name="Takaki Y."/>
            <person name="Maeno G."/>
            <person name="Sasaki R."/>
            <person name="Masui N."/>
            <person name="Fuji F."/>
            <person name="Hirama C."/>
            <person name="Nakamura Y."/>
            <person name="Ogasawara N."/>
            <person name="Kuhara S."/>
            <person name="Horikoshi K."/>
        </authorList>
    </citation>
    <scope>NUCLEOTIDE SEQUENCE [LARGE SCALE GENOMIC DNA]</scope>
    <source>
        <strain>ATCC BAA-125 / DSM 18197 / FERM 7344 / JCM 9153 / C-125</strain>
    </source>
</reference>
<organism>
    <name type="scientific">Halalkalibacterium halodurans (strain ATCC BAA-125 / DSM 18197 / FERM 7344 / JCM 9153 / C-125)</name>
    <name type="common">Bacillus halodurans</name>
    <dbReference type="NCBI Taxonomy" id="272558"/>
    <lineage>
        <taxon>Bacteria</taxon>
        <taxon>Bacillati</taxon>
        <taxon>Bacillota</taxon>
        <taxon>Bacilli</taxon>
        <taxon>Bacillales</taxon>
        <taxon>Bacillaceae</taxon>
        <taxon>Halalkalibacterium (ex Joshi et al. 2022)</taxon>
    </lineage>
</organism>
<name>Y261_HALH5</name>
<protein>
    <recommendedName>
        <fullName>Uncharacterized protein BH0261</fullName>
    </recommendedName>
</protein>
<dbReference type="EMBL" id="BA000004">
    <property type="protein sequence ID" value="BAB03980.1"/>
    <property type="molecule type" value="Genomic_DNA"/>
</dbReference>
<dbReference type="PIR" id="E83682">
    <property type="entry name" value="E83682"/>
</dbReference>
<dbReference type="RefSeq" id="WP_010896443.1">
    <property type="nucleotide sequence ID" value="NC_002570.2"/>
</dbReference>
<dbReference type="SMR" id="Q9KG52"/>
<dbReference type="GeneID" id="87595813"/>
<dbReference type="KEGG" id="bha:BH0261"/>
<dbReference type="eggNOG" id="ENOG5030DBF">
    <property type="taxonomic scope" value="Bacteria"/>
</dbReference>
<dbReference type="HOGENOM" id="CLU_2663389_0_0_9"/>
<dbReference type="Proteomes" id="UP000001258">
    <property type="component" value="Chromosome"/>
</dbReference>
<keyword id="KW-1185">Reference proteome</keyword>
<gene>
    <name type="ordered locus">BH0261</name>
</gene>
<sequence length="75" mass="8387">MTEKGYPSADAYEKELLSLLETVRYQAKQDTTLQIAERMLDYGVDVQLTAAVTGLTRDEILSGKRGKIPLQVKVK</sequence>